<proteinExistence type="inferred from homology"/>
<feature type="chain" id="PRO_0000232598" description="Aminoacyltransferase FemA">
    <location>
        <begin position="1"/>
        <end position="420"/>
    </location>
</feature>
<protein>
    <recommendedName>
        <fullName>Aminoacyltransferase FemA</fullName>
        <ecNumber>2.3.2.17</ecNumber>
    </recommendedName>
    <alternativeName>
        <fullName>Factor essential for expression of methicillin resistance A</fullName>
    </alternativeName>
    <alternativeName>
        <fullName>N-acetylmuramoyl-L-alanyl-D-glutamyl-L-lysyl-(N6-glycyl)-D-alanyl-D-alanine-diphosphoundecaprenyl-N-acetylglucosamine:glycine glycyltransferase</fullName>
    </alternativeName>
</protein>
<gene>
    <name type="primary">femA</name>
    <name type="ordered locus">SAR1387</name>
</gene>
<keyword id="KW-0012">Acyltransferase</keyword>
<keyword id="KW-0046">Antibiotic resistance</keyword>
<keyword id="KW-0133">Cell shape</keyword>
<keyword id="KW-0961">Cell wall biogenesis/degradation</keyword>
<keyword id="KW-0963">Cytoplasm</keyword>
<keyword id="KW-0573">Peptidoglycan synthesis</keyword>
<keyword id="KW-0808">Transferase</keyword>
<accession>Q6GH31</accession>
<reference key="1">
    <citation type="journal article" date="2004" name="Proc. Natl. Acad. Sci. U.S.A.">
        <title>Complete genomes of two clinical Staphylococcus aureus strains: evidence for the rapid evolution of virulence and drug resistance.</title>
        <authorList>
            <person name="Holden M.T.G."/>
            <person name="Feil E.J."/>
            <person name="Lindsay J.A."/>
            <person name="Peacock S.J."/>
            <person name="Day N.P.J."/>
            <person name="Enright M.C."/>
            <person name="Foster T.J."/>
            <person name="Moore C.E."/>
            <person name="Hurst L."/>
            <person name="Atkin R."/>
            <person name="Barron A."/>
            <person name="Bason N."/>
            <person name="Bentley S.D."/>
            <person name="Chillingworth C."/>
            <person name="Chillingworth T."/>
            <person name="Churcher C."/>
            <person name="Clark L."/>
            <person name="Corton C."/>
            <person name="Cronin A."/>
            <person name="Doggett J."/>
            <person name="Dowd L."/>
            <person name="Feltwell T."/>
            <person name="Hance Z."/>
            <person name="Harris B."/>
            <person name="Hauser H."/>
            <person name="Holroyd S."/>
            <person name="Jagels K."/>
            <person name="James K.D."/>
            <person name="Lennard N."/>
            <person name="Line A."/>
            <person name="Mayes R."/>
            <person name="Moule S."/>
            <person name="Mungall K."/>
            <person name="Ormond D."/>
            <person name="Quail M.A."/>
            <person name="Rabbinowitsch E."/>
            <person name="Rutherford K.M."/>
            <person name="Sanders M."/>
            <person name="Sharp S."/>
            <person name="Simmonds M."/>
            <person name="Stevens K."/>
            <person name="Whitehead S."/>
            <person name="Barrell B.G."/>
            <person name="Spratt B.G."/>
            <person name="Parkhill J."/>
        </authorList>
    </citation>
    <scope>NUCLEOTIDE SEQUENCE [LARGE SCALE GENOMIC DNA]</scope>
    <source>
        <strain>MRSA252</strain>
    </source>
</reference>
<dbReference type="EC" id="2.3.2.17"/>
<dbReference type="EMBL" id="BX571856">
    <property type="protein sequence ID" value="CAG40385.1"/>
    <property type="molecule type" value="Genomic_DNA"/>
</dbReference>
<dbReference type="RefSeq" id="WP_000673317.1">
    <property type="nucleotide sequence ID" value="NC_002952.2"/>
</dbReference>
<dbReference type="SMR" id="Q6GH31"/>
<dbReference type="KEGG" id="sar:SAR1387"/>
<dbReference type="HOGENOM" id="CLU_048411_1_0_9"/>
<dbReference type="Proteomes" id="UP000000596">
    <property type="component" value="Chromosome"/>
</dbReference>
<dbReference type="GO" id="GO:0005737">
    <property type="term" value="C:cytoplasm"/>
    <property type="evidence" value="ECO:0007669"/>
    <property type="project" value="UniProtKB-SubCell"/>
</dbReference>
<dbReference type="GO" id="GO:0016755">
    <property type="term" value="F:aminoacyltransferase activity"/>
    <property type="evidence" value="ECO:0007669"/>
    <property type="project" value="InterPro"/>
</dbReference>
<dbReference type="GO" id="GO:0000166">
    <property type="term" value="F:nucleotide binding"/>
    <property type="evidence" value="ECO:0007669"/>
    <property type="project" value="InterPro"/>
</dbReference>
<dbReference type="GO" id="GO:0071555">
    <property type="term" value="P:cell wall organization"/>
    <property type="evidence" value="ECO:0007669"/>
    <property type="project" value="UniProtKB-KW"/>
</dbReference>
<dbReference type="GO" id="GO:0009252">
    <property type="term" value="P:peptidoglycan biosynthetic process"/>
    <property type="evidence" value="ECO:0007669"/>
    <property type="project" value="UniProtKB-KW"/>
</dbReference>
<dbReference type="GO" id="GO:0008360">
    <property type="term" value="P:regulation of cell shape"/>
    <property type="evidence" value="ECO:0007669"/>
    <property type="project" value="UniProtKB-KW"/>
</dbReference>
<dbReference type="GO" id="GO:0046677">
    <property type="term" value="P:response to antibiotic"/>
    <property type="evidence" value="ECO:0007669"/>
    <property type="project" value="UniProtKB-KW"/>
</dbReference>
<dbReference type="Gene3D" id="1.20.58.90">
    <property type="match status" value="1"/>
</dbReference>
<dbReference type="Gene3D" id="3.40.630.30">
    <property type="match status" value="2"/>
</dbReference>
<dbReference type="InterPro" id="IPR016181">
    <property type="entry name" value="Acyl_CoA_acyltransferase"/>
</dbReference>
<dbReference type="InterPro" id="IPR003447">
    <property type="entry name" value="FEMABX"/>
</dbReference>
<dbReference type="InterPro" id="IPR050644">
    <property type="entry name" value="PG_Glycine_Bridge_Synth"/>
</dbReference>
<dbReference type="InterPro" id="IPR010978">
    <property type="entry name" value="tRNA-bd_arm"/>
</dbReference>
<dbReference type="PANTHER" id="PTHR36174:SF2">
    <property type="entry name" value="AMINOACYLTRANSFERASE FEMA"/>
    <property type="match status" value="1"/>
</dbReference>
<dbReference type="PANTHER" id="PTHR36174">
    <property type="entry name" value="LIPID II:GLYCINE GLYCYLTRANSFERASE"/>
    <property type="match status" value="1"/>
</dbReference>
<dbReference type="Pfam" id="PF02388">
    <property type="entry name" value="FemAB"/>
    <property type="match status" value="1"/>
</dbReference>
<dbReference type="SUPFAM" id="SSF55729">
    <property type="entry name" value="Acyl-CoA N-acyltransferases (Nat)"/>
    <property type="match status" value="2"/>
</dbReference>
<dbReference type="SUPFAM" id="SSF46589">
    <property type="entry name" value="tRNA-binding arm"/>
    <property type="match status" value="1"/>
</dbReference>
<dbReference type="PROSITE" id="PS51191">
    <property type="entry name" value="FEMABX"/>
    <property type="match status" value="1"/>
</dbReference>
<comment type="function">
    <text evidence="1">Catalyzes the formation of the pentaglycine interpeptide bridge, which is characteristic of the S.aureus peptidoglycan. Adds glycines 2 and 3 of the pentaglycine bridge, using glycyl-tRNA(Gly) as donor. Involved in resistance to methicillin (By similarity).</text>
</comment>
<comment type="catalytic activity">
    <reaction>
        <text>beta-D-GlcNAc-(1-&gt;4)-Mur2Ac(oyl-L-Ala-D-isoglutaminyl-L-Lys-(N(6)-Gly)-D-Ala-D-Ala)-di-trans,octa-cis-undecaprenyl diphosphate + 2 glycyl-tRNA(Gly) = MurNAc-L-Ala-D-isoglutaminyl-L-Lys-(N(6)-tri-Gly)-D-Ala-D-Ala-diphospho-di-trans,octa-cis-undecaprenyl-GlcNAc + 2 tRNA(Gly) + 2 H(+)</text>
        <dbReference type="Rhea" id="RHEA:30439"/>
        <dbReference type="Rhea" id="RHEA-COMP:9664"/>
        <dbReference type="Rhea" id="RHEA-COMP:9683"/>
        <dbReference type="ChEBI" id="CHEBI:15378"/>
        <dbReference type="ChEBI" id="CHEBI:62234"/>
        <dbReference type="ChEBI" id="CHEBI:62235"/>
        <dbReference type="ChEBI" id="CHEBI:78442"/>
        <dbReference type="ChEBI" id="CHEBI:78522"/>
        <dbReference type="EC" id="2.3.2.17"/>
    </reaction>
</comment>
<comment type="subunit">
    <text evidence="1">Homodimer. Interacts with FemB (By similarity).</text>
</comment>
<comment type="subcellular location">
    <subcellularLocation>
        <location evidence="1">Cytoplasm</location>
    </subcellularLocation>
</comment>
<comment type="similarity">
    <text evidence="2">Belongs to the FemABX family.</text>
</comment>
<name>FEMA_STAAR</name>
<organism>
    <name type="scientific">Staphylococcus aureus (strain MRSA252)</name>
    <dbReference type="NCBI Taxonomy" id="282458"/>
    <lineage>
        <taxon>Bacteria</taxon>
        <taxon>Bacillati</taxon>
        <taxon>Bacillota</taxon>
        <taxon>Bacilli</taxon>
        <taxon>Bacillales</taxon>
        <taxon>Staphylococcaceae</taxon>
        <taxon>Staphylococcus</taxon>
    </lineage>
</organism>
<sequence>MKFTNLTAKEFGAFTDSMPYSHFTQTVGHYELKLAEGYETHLVGIKNNNNEVIAACLLTAVPVMKVFKYFYSNRGPVIDYENQELVHFFFNELSKYVKKHRCLYLHIDPYLPYQYLNHDGEITGNAGNDWFFDKMSNLGFEHTGFHKGFDPVLQIRYHSVLDLKDKTADDIIKNMDGLRKRNTKKVKKNGVKVRYLSEEELPIFRSFMEDTSESKAFADRDDKFYYNRLKYYKERVLVPLAYINFDEYIKELNEERDILNKDLNKALKDIEKRPENKKAHNKRDNLQQQLDANEQKIEEGKRLQEEHGNELPISAGFFFINPFEVVYYAGGTSNAFRHFAGSYAVQWEMINYALNHGIDRYNFYGVSGKFTEDAEDAGVVKFKKGYNAEIIEYVGDFIKPINKPVYAAYTALKKVKDRIF</sequence>
<evidence type="ECO:0000250" key="1"/>
<evidence type="ECO:0000305" key="2"/>